<sequence>MRPIKKSRSLKLPKSILEEIGESDSSARRGKRNHNLPHREKRKFARISRGKNGYENRKITEEGDSKSSELNDDYLDAHRKSSTKKKSSQNKQAKESKLLDPIAFQHKIALEEDDREIAHLEKMLGIKSKDKSAHSKIDKEFGWLLEDLDQEIDDIGVPGTEDPSYGHSEDSEVSDDTGDHGSVDELESEREGNSGEEEEEFHGFESNSDEFHQPETKPIRMDPLKPAVPSLPNANVGSKYVPPSLRKKLGGDKESEDALRLRRKLQGSLNKLSIANISSIIKEIEVLYMENSRHSVTSTITNLLLQTVMGRESMLDQLAIVYAALATALYRIVGNDFGAHLLQTLVERFLQLYKSKEKEPLSSHKETSNLIVFFVELYNFQLVSCVLVYDLIRLFLRSLTELNVEMLLKIVLNCGGQLRSDDPTSLQDIVTEMNLLLASADPSTISVRTKFMVESITNLKENKKTKVANASAQSKFEAVNQLKKFLGSLGNRSLNAREPLRVTLEDIEQIETKGRWWLVGASWNNVPSGDNTLSTEALQDKKKSEELTAHSKILQAAKKLRLNSTLRTSIFVALVGSEDYIDAWERVLKLHLKRNQLPEIAYVILHCVGNEKLYNPFYGLVALKCCTLQHNLKKSFQFSLWDFFNELQPDDDSEEREISMRRIVNLAKLYASLVIEAAQPLTILKHVDFMAINAQMQTFLLVFFTDIILGVKDDLQLVKIFENCKAEKNLSSKVDWFLKTYVRKNPLVDNSKKALFKSNLAMASAILQSISKEEI</sequence>
<organism>
    <name type="scientific">Schizosaccharomyces pombe (strain 972 / ATCC 24843)</name>
    <name type="common">Fission yeast</name>
    <dbReference type="NCBI Taxonomy" id="284812"/>
    <lineage>
        <taxon>Eukaryota</taxon>
        <taxon>Fungi</taxon>
        <taxon>Dikarya</taxon>
        <taxon>Ascomycota</taxon>
        <taxon>Taphrinomycotina</taxon>
        <taxon>Schizosaccharomycetes</taxon>
        <taxon>Schizosaccharomycetales</taxon>
        <taxon>Schizosaccharomycetaceae</taxon>
        <taxon>Schizosaccharomyces</taxon>
    </lineage>
</organism>
<evidence type="ECO:0000250" key="1"/>
<evidence type="ECO:0000255" key="2">
    <source>
        <dbReference type="PROSITE-ProRule" id="PRU00698"/>
    </source>
</evidence>
<evidence type="ECO:0000256" key="3">
    <source>
        <dbReference type="SAM" id="MobiDB-lite"/>
    </source>
</evidence>
<evidence type="ECO:0000269" key="4">
    <source>
    </source>
</evidence>
<evidence type="ECO:0000305" key="5"/>
<gene>
    <name type="primary">sgd1</name>
    <name type="ORF">SPAC24C9.11</name>
</gene>
<reference key="1">
    <citation type="journal article" date="2002" name="Nature">
        <title>The genome sequence of Schizosaccharomyces pombe.</title>
        <authorList>
            <person name="Wood V."/>
            <person name="Gwilliam R."/>
            <person name="Rajandream M.A."/>
            <person name="Lyne M.H."/>
            <person name="Lyne R."/>
            <person name="Stewart A."/>
            <person name="Sgouros J.G."/>
            <person name="Peat N."/>
            <person name="Hayles J."/>
            <person name="Baker S.G."/>
            <person name="Basham D."/>
            <person name="Bowman S."/>
            <person name="Brooks K."/>
            <person name="Brown D."/>
            <person name="Brown S."/>
            <person name="Chillingworth T."/>
            <person name="Churcher C.M."/>
            <person name="Collins M."/>
            <person name="Connor R."/>
            <person name="Cronin A."/>
            <person name="Davis P."/>
            <person name="Feltwell T."/>
            <person name="Fraser A."/>
            <person name="Gentles S."/>
            <person name="Goble A."/>
            <person name="Hamlin N."/>
            <person name="Harris D.E."/>
            <person name="Hidalgo J."/>
            <person name="Hodgson G."/>
            <person name="Holroyd S."/>
            <person name="Hornsby T."/>
            <person name="Howarth S."/>
            <person name="Huckle E.J."/>
            <person name="Hunt S."/>
            <person name="Jagels K."/>
            <person name="James K.D."/>
            <person name="Jones L."/>
            <person name="Jones M."/>
            <person name="Leather S."/>
            <person name="McDonald S."/>
            <person name="McLean J."/>
            <person name="Mooney P."/>
            <person name="Moule S."/>
            <person name="Mungall K.L."/>
            <person name="Murphy L.D."/>
            <person name="Niblett D."/>
            <person name="Odell C."/>
            <person name="Oliver K."/>
            <person name="O'Neil S."/>
            <person name="Pearson D."/>
            <person name="Quail M.A."/>
            <person name="Rabbinowitsch E."/>
            <person name="Rutherford K.M."/>
            <person name="Rutter S."/>
            <person name="Saunders D."/>
            <person name="Seeger K."/>
            <person name="Sharp S."/>
            <person name="Skelton J."/>
            <person name="Simmonds M.N."/>
            <person name="Squares R."/>
            <person name="Squares S."/>
            <person name="Stevens K."/>
            <person name="Taylor K."/>
            <person name="Taylor R.G."/>
            <person name="Tivey A."/>
            <person name="Walsh S.V."/>
            <person name="Warren T."/>
            <person name="Whitehead S."/>
            <person name="Woodward J.R."/>
            <person name="Volckaert G."/>
            <person name="Aert R."/>
            <person name="Robben J."/>
            <person name="Grymonprez B."/>
            <person name="Weltjens I."/>
            <person name="Vanstreels E."/>
            <person name="Rieger M."/>
            <person name="Schaefer M."/>
            <person name="Mueller-Auer S."/>
            <person name="Gabel C."/>
            <person name="Fuchs M."/>
            <person name="Duesterhoeft A."/>
            <person name="Fritzc C."/>
            <person name="Holzer E."/>
            <person name="Moestl D."/>
            <person name="Hilbert H."/>
            <person name="Borzym K."/>
            <person name="Langer I."/>
            <person name="Beck A."/>
            <person name="Lehrach H."/>
            <person name="Reinhardt R."/>
            <person name="Pohl T.M."/>
            <person name="Eger P."/>
            <person name="Zimmermann W."/>
            <person name="Wedler H."/>
            <person name="Wambutt R."/>
            <person name="Purnelle B."/>
            <person name="Goffeau A."/>
            <person name="Cadieu E."/>
            <person name="Dreano S."/>
            <person name="Gloux S."/>
            <person name="Lelaure V."/>
            <person name="Mottier S."/>
            <person name="Galibert F."/>
            <person name="Aves S.J."/>
            <person name="Xiang Z."/>
            <person name="Hunt C."/>
            <person name="Moore K."/>
            <person name="Hurst S.M."/>
            <person name="Lucas M."/>
            <person name="Rochet M."/>
            <person name="Gaillardin C."/>
            <person name="Tallada V.A."/>
            <person name="Garzon A."/>
            <person name="Thode G."/>
            <person name="Daga R.R."/>
            <person name="Cruzado L."/>
            <person name="Jimenez J."/>
            <person name="Sanchez M."/>
            <person name="del Rey F."/>
            <person name="Benito J."/>
            <person name="Dominguez A."/>
            <person name="Revuelta J.L."/>
            <person name="Moreno S."/>
            <person name="Armstrong J."/>
            <person name="Forsburg S.L."/>
            <person name="Cerutti L."/>
            <person name="Lowe T."/>
            <person name="McCombie W.R."/>
            <person name="Paulsen I."/>
            <person name="Potashkin J."/>
            <person name="Shpakovski G.V."/>
            <person name="Ussery D."/>
            <person name="Barrell B.G."/>
            <person name="Nurse P."/>
        </authorList>
    </citation>
    <scope>NUCLEOTIDE SEQUENCE [LARGE SCALE GENOMIC DNA]</scope>
    <source>
        <strain>972 / ATCC 24843</strain>
    </source>
</reference>
<reference key="2">
    <citation type="journal article" date="2006" name="Nat. Biotechnol.">
        <title>ORFeome cloning and global analysis of protein localization in the fission yeast Schizosaccharomyces pombe.</title>
        <authorList>
            <person name="Matsuyama A."/>
            <person name="Arai R."/>
            <person name="Yashiroda Y."/>
            <person name="Shirai A."/>
            <person name="Kamata A."/>
            <person name="Sekido S."/>
            <person name="Kobayashi Y."/>
            <person name="Hashimoto A."/>
            <person name="Hamamoto M."/>
            <person name="Hiraoka Y."/>
            <person name="Horinouchi S."/>
            <person name="Yoshida M."/>
        </authorList>
    </citation>
    <scope>SUBCELLULAR LOCATION [LARGE SCALE ANALYSIS]</scope>
</reference>
<accession>O13971</accession>
<keyword id="KW-0539">Nucleus</keyword>
<keyword id="KW-1185">Reference proteome</keyword>
<name>SGD1_SCHPO</name>
<feature type="chain" id="PRO_0000316029" description="Suppressor of glycerol defect protein 1">
    <location>
        <begin position="1"/>
        <end position="775"/>
    </location>
</feature>
<feature type="domain" description="MIF4G" evidence="2">
    <location>
        <begin position="262"/>
        <end position="463"/>
    </location>
</feature>
<feature type="domain" description="MI" evidence="2">
    <location>
        <begin position="565"/>
        <end position="689"/>
    </location>
</feature>
<feature type="region of interest" description="Disordered" evidence="3">
    <location>
        <begin position="1"/>
        <end position="101"/>
    </location>
</feature>
<feature type="region of interest" description="Disordered" evidence="3">
    <location>
        <begin position="152"/>
        <end position="253"/>
    </location>
</feature>
<feature type="compositionally biased region" description="Basic residues" evidence="3">
    <location>
        <begin position="1"/>
        <end position="11"/>
    </location>
</feature>
<feature type="compositionally biased region" description="Basic residues" evidence="3">
    <location>
        <begin position="28"/>
        <end position="49"/>
    </location>
</feature>
<feature type="compositionally biased region" description="Basic and acidic residues" evidence="3">
    <location>
        <begin position="52"/>
        <end position="79"/>
    </location>
</feature>
<feature type="compositionally biased region" description="Basic and acidic residues" evidence="3">
    <location>
        <begin position="177"/>
        <end position="193"/>
    </location>
</feature>
<feature type="compositionally biased region" description="Basic and acidic residues" evidence="3">
    <location>
        <begin position="209"/>
        <end position="223"/>
    </location>
</feature>
<proteinExistence type="inferred from homology"/>
<dbReference type="EMBL" id="CU329670">
    <property type="protein sequence ID" value="CAB11268.1"/>
    <property type="molecule type" value="Genomic_DNA"/>
</dbReference>
<dbReference type="PIR" id="T38352">
    <property type="entry name" value="T38352"/>
</dbReference>
<dbReference type="RefSeq" id="NP_594036.1">
    <property type="nucleotide sequence ID" value="NM_001019461.2"/>
</dbReference>
<dbReference type="SMR" id="O13971"/>
<dbReference type="BioGRID" id="278107">
    <property type="interactions" value="4"/>
</dbReference>
<dbReference type="FunCoup" id="O13971">
    <property type="interactions" value="650"/>
</dbReference>
<dbReference type="STRING" id="284812.O13971"/>
<dbReference type="iPTMnet" id="O13971"/>
<dbReference type="PaxDb" id="4896-SPAC24C9.11.1"/>
<dbReference type="EnsemblFungi" id="SPAC24C9.11.1">
    <property type="protein sequence ID" value="SPAC24C9.11.1:pep"/>
    <property type="gene ID" value="SPAC24C9.11"/>
</dbReference>
<dbReference type="GeneID" id="2541610"/>
<dbReference type="KEGG" id="spo:2541610"/>
<dbReference type="PomBase" id="SPAC24C9.11">
    <property type="gene designation" value="sgd1"/>
</dbReference>
<dbReference type="VEuPathDB" id="FungiDB:SPAC24C9.11"/>
<dbReference type="eggNOG" id="KOG2141">
    <property type="taxonomic scope" value="Eukaryota"/>
</dbReference>
<dbReference type="HOGENOM" id="CLU_006786_2_1_1"/>
<dbReference type="InParanoid" id="O13971"/>
<dbReference type="OMA" id="FMVDILN"/>
<dbReference type="PhylomeDB" id="O13971"/>
<dbReference type="PRO" id="PR:O13971"/>
<dbReference type="Proteomes" id="UP000002485">
    <property type="component" value="Chromosome I"/>
</dbReference>
<dbReference type="GO" id="GO:0005730">
    <property type="term" value="C:nucleolus"/>
    <property type="evidence" value="ECO:0007005"/>
    <property type="project" value="PomBase"/>
</dbReference>
<dbReference type="GO" id="GO:0003723">
    <property type="term" value="F:RNA binding"/>
    <property type="evidence" value="ECO:0000318"/>
    <property type="project" value="GO_Central"/>
</dbReference>
<dbReference type="GO" id="GO:0042274">
    <property type="term" value="P:ribosomal small subunit biogenesis"/>
    <property type="evidence" value="ECO:0000318"/>
    <property type="project" value="GO_Central"/>
</dbReference>
<dbReference type="Gene3D" id="1.25.40.180">
    <property type="match status" value="1"/>
</dbReference>
<dbReference type="InterPro" id="IPR016024">
    <property type="entry name" value="ARM-type_fold"/>
</dbReference>
<dbReference type="InterPro" id="IPR050781">
    <property type="entry name" value="CWC22_splicing_factor"/>
</dbReference>
<dbReference type="InterPro" id="IPR003891">
    <property type="entry name" value="Initiation_fac_eIF4g_MI"/>
</dbReference>
<dbReference type="InterPro" id="IPR003890">
    <property type="entry name" value="MIF4G-like_typ-3"/>
</dbReference>
<dbReference type="PANTHER" id="PTHR18034">
    <property type="entry name" value="CELL CYCLE CONTROL PROTEIN CWF22-RELATED"/>
    <property type="match status" value="1"/>
</dbReference>
<dbReference type="PANTHER" id="PTHR18034:SF4">
    <property type="entry name" value="NUCLEOLAR MIF4G DOMAIN-CONTAINING PROTEIN 1"/>
    <property type="match status" value="1"/>
</dbReference>
<dbReference type="Pfam" id="PF02847">
    <property type="entry name" value="MA3"/>
    <property type="match status" value="1"/>
</dbReference>
<dbReference type="Pfam" id="PF02854">
    <property type="entry name" value="MIF4G"/>
    <property type="match status" value="1"/>
</dbReference>
<dbReference type="SMART" id="SM00544">
    <property type="entry name" value="MA3"/>
    <property type="match status" value="1"/>
</dbReference>
<dbReference type="SMART" id="SM00543">
    <property type="entry name" value="MIF4G"/>
    <property type="match status" value="1"/>
</dbReference>
<dbReference type="SUPFAM" id="SSF48371">
    <property type="entry name" value="ARM repeat"/>
    <property type="match status" value="1"/>
</dbReference>
<dbReference type="PROSITE" id="PS51366">
    <property type="entry name" value="MI"/>
    <property type="match status" value="1"/>
</dbReference>
<protein>
    <recommendedName>
        <fullName>Suppressor of glycerol defect protein 1</fullName>
    </recommendedName>
</protein>
<comment type="function">
    <text evidence="1">Involved in osmoregulatory glycerol response.</text>
</comment>
<comment type="subcellular location">
    <subcellularLocation>
        <location evidence="4">Nucleus</location>
        <location evidence="4">Nucleolus</location>
    </subcellularLocation>
</comment>
<comment type="similarity">
    <text evidence="5">Belongs to the CWC22 family.</text>
</comment>